<reference key="1">
    <citation type="journal article" date="1998" name="Science">
        <title>Genome sequence of the nematode C. elegans: a platform for investigating biology.</title>
        <authorList>
            <consortium name="The C. elegans sequencing consortium"/>
        </authorList>
    </citation>
    <scope>NUCLEOTIDE SEQUENCE [LARGE SCALE GENOMIC DNA]</scope>
    <source>
        <strain>Bristol N2</strain>
    </source>
</reference>
<sequence>MAQSVPPGDIQTQPGTKIVFNAPYDDKHTYHIKVINSSARRIGYGIKTTNMKRLGVDPPCGVLDPKEAVLLAVSCDAFAFGQEDTNNDRITVEWTNTPDGAAKQFRREWFQGDGMARRKNLPIEYNP</sequence>
<accession>Q9TVW5</accession>
<evidence type="ECO:0000250" key="1"/>
<evidence type="ECO:0000255" key="2">
    <source>
        <dbReference type="PROSITE-ProRule" id="PRU00132"/>
    </source>
</evidence>
<name>MSP77_CAEEL</name>
<feature type="initiator methionine" description="Removed" evidence="1">
    <location>
        <position position="1"/>
    </location>
</feature>
<feature type="chain" id="PRO_0000213444" description="Major sperm protein 77/79">
    <location>
        <begin position="2"/>
        <end position="127"/>
    </location>
</feature>
<feature type="domain" description="MSP" evidence="2">
    <location>
        <begin position="9"/>
        <end position="126"/>
    </location>
</feature>
<feature type="modified residue" description="N-acetylalanine" evidence="1">
    <location>
        <position position="2"/>
    </location>
</feature>
<protein>
    <recommendedName>
        <fullName>Major sperm protein 77/79</fullName>
        <shortName>MSP</shortName>
    </recommendedName>
</protein>
<proteinExistence type="evidence at transcript level"/>
<keyword id="KW-0007">Acetylation</keyword>
<keyword id="KW-0966">Cell projection</keyword>
<keyword id="KW-0963">Cytoplasm</keyword>
<keyword id="KW-0206">Cytoskeleton</keyword>
<keyword id="KW-1185">Reference proteome</keyword>
<gene>
    <name type="primary">msp-77</name>
    <name type="ORF">F32B6.6</name>
</gene>
<gene>
    <name type="primary">msp-79</name>
    <name type="ORF">T13F2.10</name>
</gene>
<dbReference type="EMBL" id="Z81074">
    <property type="protein sequence ID" value="CAB03037.1"/>
    <property type="molecule type" value="Genomic_DNA"/>
</dbReference>
<dbReference type="EMBL" id="Z81122">
    <property type="protein sequence ID" value="CAB03361.1"/>
    <property type="molecule type" value="Genomic_DNA"/>
</dbReference>
<dbReference type="PIR" id="T21640">
    <property type="entry name" value="T21640"/>
</dbReference>
<dbReference type="RefSeq" id="NP_501740.1">
    <property type="nucleotide sequence ID" value="NM_069339.6"/>
</dbReference>
<dbReference type="RefSeq" id="NP_501781.1">
    <property type="nucleotide sequence ID" value="NM_069380.5"/>
</dbReference>
<dbReference type="SMR" id="Q9TVW5"/>
<dbReference type="BioGRID" id="42916">
    <property type="interactions" value="1"/>
</dbReference>
<dbReference type="BioGRID" id="42948">
    <property type="interactions" value="1"/>
</dbReference>
<dbReference type="FunCoup" id="Q9TVW5">
    <property type="interactions" value="12"/>
</dbReference>
<dbReference type="STRING" id="6239.F32B6.6.1"/>
<dbReference type="PaxDb" id="6239-F32B6.6"/>
<dbReference type="PeptideAtlas" id="Q9TVW5"/>
<dbReference type="EnsemblMetazoa" id="F32B6.6.1">
    <property type="protein sequence ID" value="F32B6.6.1"/>
    <property type="gene ID" value="WBGene00003464"/>
</dbReference>
<dbReference type="EnsemblMetazoa" id="T13F2.10.1">
    <property type="protein sequence ID" value="T13F2.10.1"/>
    <property type="gene ID" value="WBGene00003466"/>
</dbReference>
<dbReference type="GeneID" id="177812"/>
<dbReference type="GeneID" id="177844"/>
<dbReference type="KEGG" id="cel:CELE_F32B6.6"/>
<dbReference type="KEGG" id="cel:CELE_T13F2.10"/>
<dbReference type="UCSC" id="T13F2.10">
    <property type="organism name" value="c. elegans"/>
</dbReference>
<dbReference type="AGR" id="WB:WBGene00003464"/>
<dbReference type="AGR" id="WB:WBGene00003466"/>
<dbReference type="CTD" id="177812"/>
<dbReference type="CTD" id="177844"/>
<dbReference type="WormBase" id="F32B6.6">
    <property type="protein sequence ID" value="CE09861"/>
    <property type="gene ID" value="WBGene00003464"/>
    <property type="gene designation" value="msp-77"/>
</dbReference>
<dbReference type="WormBase" id="T13F2.10">
    <property type="protein sequence ID" value="CE09861"/>
    <property type="gene ID" value="WBGene00003466"/>
    <property type="gene designation" value="msp-79"/>
</dbReference>
<dbReference type="eggNOG" id="ENOG502RXF6">
    <property type="taxonomic scope" value="Eukaryota"/>
</dbReference>
<dbReference type="GeneTree" id="ENSGT00970000195833"/>
<dbReference type="HOGENOM" id="CLU_120664_0_1_1"/>
<dbReference type="InParanoid" id="Q9TVW5"/>
<dbReference type="OMA" id="EPRDRIW"/>
<dbReference type="OrthoDB" id="5918453at2759"/>
<dbReference type="PhylomeDB" id="Q9TVW5"/>
<dbReference type="PRO" id="PR:Q9TVW5"/>
<dbReference type="Proteomes" id="UP000001940">
    <property type="component" value="Chromosome IV"/>
</dbReference>
<dbReference type="Bgee" id="WBGene00003464">
    <property type="expression patterns" value="Expressed in adult organism and 2 other cell types or tissues"/>
</dbReference>
<dbReference type="GO" id="GO:0005737">
    <property type="term" value="C:cytoplasm"/>
    <property type="evidence" value="ECO:0007669"/>
    <property type="project" value="UniProtKB-KW"/>
</dbReference>
<dbReference type="GO" id="GO:0005856">
    <property type="term" value="C:cytoskeleton"/>
    <property type="evidence" value="ECO:0007669"/>
    <property type="project" value="UniProtKB-SubCell"/>
</dbReference>
<dbReference type="GO" id="GO:0031143">
    <property type="term" value="C:pseudopodium"/>
    <property type="evidence" value="ECO:0007669"/>
    <property type="project" value="UniProtKB-SubCell"/>
</dbReference>
<dbReference type="GO" id="GO:0001556">
    <property type="term" value="P:oocyte maturation"/>
    <property type="evidence" value="ECO:0000314"/>
    <property type="project" value="WormBase"/>
</dbReference>
<dbReference type="GO" id="GO:0043410">
    <property type="term" value="P:positive regulation of MAPK cascade"/>
    <property type="evidence" value="ECO:0000314"/>
    <property type="project" value="WormBase"/>
</dbReference>
<dbReference type="GO" id="GO:0045987">
    <property type="term" value="P:positive regulation of smooth muscle contraction"/>
    <property type="evidence" value="ECO:0000314"/>
    <property type="project" value="WormBase"/>
</dbReference>
<dbReference type="FunFam" id="2.60.40.10:FF:001120">
    <property type="entry name" value="Major sperm protein 19/31/40/45/50/51/53/59/61/65/81/113/142"/>
    <property type="match status" value="1"/>
</dbReference>
<dbReference type="Gene3D" id="2.60.40.10">
    <property type="entry name" value="Immunoglobulins"/>
    <property type="match status" value="1"/>
</dbReference>
<dbReference type="InterPro" id="IPR013783">
    <property type="entry name" value="Ig-like_fold"/>
</dbReference>
<dbReference type="InterPro" id="IPR000535">
    <property type="entry name" value="MSP_dom"/>
</dbReference>
<dbReference type="InterPro" id="IPR051155">
    <property type="entry name" value="Nematode_MSP"/>
</dbReference>
<dbReference type="InterPro" id="IPR008962">
    <property type="entry name" value="PapD-like_sf"/>
</dbReference>
<dbReference type="PANTHER" id="PTHR22920">
    <property type="entry name" value="MAJOR SPERM PROTEIN"/>
    <property type="match status" value="1"/>
</dbReference>
<dbReference type="PANTHER" id="PTHR22920:SF7">
    <property type="entry name" value="MSP DOMAIN-CONTAINING PROTEIN-RELATED"/>
    <property type="match status" value="1"/>
</dbReference>
<dbReference type="Pfam" id="PF00635">
    <property type="entry name" value="Motile_Sperm"/>
    <property type="match status" value="1"/>
</dbReference>
<dbReference type="SUPFAM" id="SSF49354">
    <property type="entry name" value="PapD-like"/>
    <property type="match status" value="1"/>
</dbReference>
<dbReference type="PROSITE" id="PS50202">
    <property type="entry name" value="MSP"/>
    <property type="match status" value="1"/>
</dbReference>
<organism>
    <name type="scientific">Caenorhabditis elegans</name>
    <dbReference type="NCBI Taxonomy" id="6239"/>
    <lineage>
        <taxon>Eukaryota</taxon>
        <taxon>Metazoa</taxon>
        <taxon>Ecdysozoa</taxon>
        <taxon>Nematoda</taxon>
        <taxon>Chromadorea</taxon>
        <taxon>Rhabditida</taxon>
        <taxon>Rhabditina</taxon>
        <taxon>Rhabditomorpha</taxon>
        <taxon>Rhabditoidea</taxon>
        <taxon>Rhabditidae</taxon>
        <taxon>Peloderinae</taxon>
        <taxon>Caenorhabditis</taxon>
    </lineage>
</organism>
<comment type="function">
    <text>Central component in molecular interactions underlying sperm crawling. Forms an extensive filament system that extends from sperm villipoda, along the leading edge of the pseudopod.</text>
</comment>
<comment type="subcellular location">
    <subcellularLocation>
        <location>Cell projection</location>
        <location>Pseudopodium</location>
    </subcellularLocation>
    <subcellularLocation>
        <location>Cytoplasm</location>
        <location>Cytoskeleton</location>
    </subcellularLocation>
</comment>
<comment type="tissue specificity">
    <text>Sperm.</text>
</comment>
<comment type="miscellaneous">
    <text>Around 30 MSP isoforms may exist in C.elegans.</text>
</comment>